<accession>Q9VX88</accession>
<accession>Q32KD5</accession>
<keyword id="KW-0072">Autophagy</keyword>
<keyword id="KW-0156">Chromatin regulator</keyword>
<keyword id="KW-0458">Lysosome</keyword>
<keyword id="KW-0539">Nucleus</keyword>
<keyword id="KW-1185">Reference proteome</keyword>
<feature type="chain" id="PRO_0000438854" description="WW domain-containing adapter protein with coiled-coil homolog">
    <location>
        <begin position="1"/>
        <end position="834"/>
    </location>
</feature>
<feature type="domain" description="WW" evidence="2">
    <location>
        <begin position="244"/>
        <end position="271"/>
    </location>
</feature>
<feature type="region of interest" description="Disordered" evidence="3">
    <location>
        <begin position="1"/>
        <end position="247"/>
    </location>
</feature>
<feature type="region of interest" description="Disordered" evidence="3">
    <location>
        <begin position="268"/>
        <end position="411"/>
    </location>
</feature>
<feature type="region of interest" description="Disordered" evidence="3">
    <location>
        <begin position="430"/>
        <end position="504"/>
    </location>
</feature>
<feature type="compositionally biased region" description="Low complexity" evidence="3">
    <location>
        <begin position="22"/>
        <end position="31"/>
    </location>
</feature>
<feature type="compositionally biased region" description="Basic and acidic residues" evidence="3">
    <location>
        <begin position="33"/>
        <end position="50"/>
    </location>
</feature>
<feature type="compositionally biased region" description="Gly residues" evidence="3">
    <location>
        <begin position="53"/>
        <end position="77"/>
    </location>
</feature>
<feature type="compositionally biased region" description="Basic and acidic residues" evidence="3">
    <location>
        <begin position="96"/>
        <end position="108"/>
    </location>
</feature>
<feature type="compositionally biased region" description="Gly residues" evidence="3">
    <location>
        <begin position="109"/>
        <end position="119"/>
    </location>
</feature>
<feature type="compositionally biased region" description="Basic and acidic residues" evidence="3">
    <location>
        <begin position="127"/>
        <end position="168"/>
    </location>
</feature>
<feature type="compositionally biased region" description="Basic and acidic residues" evidence="3">
    <location>
        <begin position="181"/>
        <end position="246"/>
    </location>
</feature>
<feature type="compositionally biased region" description="Basic and acidic residues" evidence="3">
    <location>
        <begin position="268"/>
        <end position="303"/>
    </location>
</feature>
<feature type="compositionally biased region" description="Polar residues" evidence="3">
    <location>
        <begin position="304"/>
        <end position="314"/>
    </location>
</feature>
<feature type="compositionally biased region" description="Polar residues" evidence="3">
    <location>
        <begin position="350"/>
        <end position="363"/>
    </location>
</feature>
<feature type="compositionally biased region" description="Gly residues" evidence="3">
    <location>
        <begin position="369"/>
        <end position="384"/>
    </location>
</feature>
<feature type="compositionally biased region" description="Low complexity" evidence="3">
    <location>
        <begin position="402"/>
        <end position="411"/>
    </location>
</feature>
<feature type="compositionally biased region" description="Low complexity" evidence="3">
    <location>
        <begin position="431"/>
        <end position="466"/>
    </location>
</feature>
<feature type="compositionally biased region" description="Polar residues" evidence="3">
    <location>
        <begin position="472"/>
        <end position="496"/>
    </location>
</feature>
<sequence length="834" mass="89367">MVMHARKPQRMNDGYFEKHTSHTSYQSSKYSSSKRDYERDRSSNYRDRDLSPGAGGGGGGGSAGGGGGGSGNGGGPLNNGNSYRSQSPDIDSPSSRSHDLRDRSDHRGGGGGNGRGGSGERYSFMQKMRDRDRDVYKKDKYSDKRDRRGNDRDSESSYRTNHDRDRRGGGGSGGGSGKLCSSRENDKRSGSDDRDRDRDRDLRDLRDKRDRGSDRDRDMYKKDKYADKRERSDRGERTARYGDWSEHVSSSGKMYYYNCKTEISQWEKPKEWVDRERNLPRDQHREKDYRDKDRDRDRDDRFSRSTYKHSNSSRDNSRLRWNYDNDGGPPSHRRRLDGRHNDNADMDISGDSTPTSEASYSLSGTPTTHGGGPGGGGPGGGGGSNSDQPMGNALPRLSSHPTANSSASVATGTGATGGLHYGSGTGGGPVTGATMLPTMSGMLNSNSSNSAGGSSSNASSSSLRNSVVGHIGSTSGTTVPTLGSQDPHQHHLNSNAPLPPGAKGKDQALLMRQKMHLGLGVLDVQSHHGVNSVGSVSDGTNHAYNSVNNSVSGSLRDNSVNSPLYMHHSMSPSLNFTKSPIPTIVGHTNNMSIAYTCNPPFGLKATLDGGVMVANASPATPGGNASSGSSGANSSQSIVPGMGPVCGISVITSMGSNSGTLCEGPPTPTQELDLSGSALEQQQLAAAAAAATASSLQLQAAQQAQQQRKLDGTSSATLSSLQSCVSSSGQAANLRGPEISPKLAKYFRADLIAHVTNWHAEVLERQAQKCCEDTHLFGDITCTRICAELKCARSLVRSTEINATLQEQKIMYLRHQIRRIEESKTQNAFMSDDT</sequence>
<comment type="function">
    <text evidence="1 4 5">Acts as a linker between gene transcription and histone H2B monoubiquitination at 'Lys-118' (By similarity). Regulates the cell-cycle checkpoint activation in response to DNA damage (By similarity). Positive regulator of amino acid starvation-induced autophagy (PubMed:26812014). Also acts as a negative regulator of basal autophagy (PubMed:26812014). Positively regulates mTor activity (PubMed:26812014). Promotes, in an energy-dependent manner, the assembly of the TTT complex and the RUVBL complex composed of pont and rept into the TTT-RUVBL complex (By similarity). This leads to dimerization of the mTORC1 complex and its subsequent activation (By similarity). May negatively regulate the ubiquitin proteasome pathway (By similarity). Required for habituation, a form of non-associative learning (PubMed:26757981).</text>
</comment>
<comment type="subcellular location">
    <subcellularLocation>
        <location evidence="5">Nucleus</location>
    </subcellularLocation>
    <subcellularLocation>
        <location evidence="5">Lysosome</location>
    </subcellularLocation>
</comment>
<comment type="tissue specificity">
    <text evidence="5">Expressed in adult head and thorax and in larval central nervous system and fat body.</text>
</comment>
<comment type="disruption phenotype">
    <text evidence="4 5">Neurodegeneration, slow growth, decreased starvation-induced autophagy, increased basal autophagy and decreased mTor activity (PubMed:26812014). RNAi-mediated knockdown in neurons results in impaired habituation during a light-off jump reflex habituation assay where flies are exposed to a series of sudden light-off pulses and measured each time for a jump response (PubMed:26757981). Mutants fail to adapt their behavior and retain high average jump response throughout the experiment in contrast to controls which quickly habituate to the repeated light-off stimuli (PubMed:26757981).</text>
</comment>
<organism evidence="10">
    <name type="scientific">Drosophila melanogaster</name>
    <name type="common">Fruit fly</name>
    <dbReference type="NCBI Taxonomy" id="7227"/>
    <lineage>
        <taxon>Eukaryota</taxon>
        <taxon>Metazoa</taxon>
        <taxon>Ecdysozoa</taxon>
        <taxon>Arthropoda</taxon>
        <taxon>Hexapoda</taxon>
        <taxon>Insecta</taxon>
        <taxon>Pterygota</taxon>
        <taxon>Neoptera</taxon>
        <taxon>Endopterygota</taxon>
        <taxon>Diptera</taxon>
        <taxon>Brachycera</taxon>
        <taxon>Muscomorpha</taxon>
        <taxon>Ephydroidea</taxon>
        <taxon>Drosophilidae</taxon>
        <taxon>Drosophila</taxon>
        <taxon>Sophophora</taxon>
    </lineage>
</organism>
<name>WAC_DROME</name>
<reference evidence="10" key="1">
    <citation type="journal article" date="2000" name="Science">
        <title>The genome sequence of Drosophila melanogaster.</title>
        <authorList>
            <person name="Adams M.D."/>
            <person name="Celniker S.E."/>
            <person name="Holt R.A."/>
            <person name="Evans C.A."/>
            <person name="Gocayne J.D."/>
            <person name="Amanatides P.G."/>
            <person name="Scherer S.E."/>
            <person name="Li P.W."/>
            <person name="Hoskins R.A."/>
            <person name="Galle R.F."/>
            <person name="George R.A."/>
            <person name="Lewis S.E."/>
            <person name="Richards S."/>
            <person name="Ashburner M."/>
            <person name="Henderson S.N."/>
            <person name="Sutton G.G."/>
            <person name="Wortman J.R."/>
            <person name="Yandell M.D."/>
            <person name="Zhang Q."/>
            <person name="Chen L.X."/>
            <person name="Brandon R.C."/>
            <person name="Rogers Y.-H.C."/>
            <person name="Blazej R.G."/>
            <person name="Champe M."/>
            <person name="Pfeiffer B.D."/>
            <person name="Wan K.H."/>
            <person name="Doyle C."/>
            <person name="Baxter E.G."/>
            <person name="Helt G."/>
            <person name="Nelson C.R."/>
            <person name="Miklos G.L.G."/>
            <person name="Abril J.F."/>
            <person name="Agbayani A."/>
            <person name="An H.-J."/>
            <person name="Andrews-Pfannkoch C."/>
            <person name="Baldwin D."/>
            <person name="Ballew R.M."/>
            <person name="Basu A."/>
            <person name="Baxendale J."/>
            <person name="Bayraktaroglu L."/>
            <person name="Beasley E.M."/>
            <person name="Beeson K.Y."/>
            <person name="Benos P.V."/>
            <person name="Berman B.P."/>
            <person name="Bhandari D."/>
            <person name="Bolshakov S."/>
            <person name="Borkova D."/>
            <person name="Botchan M.R."/>
            <person name="Bouck J."/>
            <person name="Brokstein P."/>
            <person name="Brottier P."/>
            <person name="Burtis K.C."/>
            <person name="Busam D.A."/>
            <person name="Butler H."/>
            <person name="Cadieu E."/>
            <person name="Center A."/>
            <person name="Chandra I."/>
            <person name="Cherry J.M."/>
            <person name="Cawley S."/>
            <person name="Dahlke C."/>
            <person name="Davenport L.B."/>
            <person name="Davies P."/>
            <person name="de Pablos B."/>
            <person name="Delcher A."/>
            <person name="Deng Z."/>
            <person name="Mays A.D."/>
            <person name="Dew I."/>
            <person name="Dietz S.M."/>
            <person name="Dodson K."/>
            <person name="Doup L.E."/>
            <person name="Downes M."/>
            <person name="Dugan-Rocha S."/>
            <person name="Dunkov B.C."/>
            <person name="Dunn P."/>
            <person name="Durbin K.J."/>
            <person name="Evangelista C.C."/>
            <person name="Ferraz C."/>
            <person name="Ferriera S."/>
            <person name="Fleischmann W."/>
            <person name="Fosler C."/>
            <person name="Gabrielian A.E."/>
            <person name="Garg N.S."/>
            <person name="Gelbart W.M."/>
            <person name="Glasser K."/>
            <person name="Glodek A."/>
            <person name="Gong F."/>
            <person name="Gorrell J.H."/>
            <person name="Gu Z."/>
            <person name="Guan P."/>
            <person name="Harris M."/>
            <person name="Harris N.L."/>
            <person name="Harvey D.A."/>
            <person name="Heiman T.J."/>
            <person name="Hernandez J.R."/>
            <person name="Houck J."/>
            <person name="Hostin D."/>
            <person name="Houston K.A."/>
            <person name="Howland T.J."/>
            <person name="Wei M.-H."/>
            <person name="Ibegwam C."/>
            <person name="Jalali M."/>
            <person name="Kalush F."/>
            <person name="Karpen G.H."/>
            <person name="Ke Z."/>
            <person name="Kennison J.A."/>
            <person name="Ketchum K.A."/>
            <person name="Kimmel B.E."/>
            <person name="Kodira C.D."/>
            <person name="Kraft C.L."/>
            <person name="Kravitz S."/>
            <person name="Kulp D."/>
            <person name="Lai Z."/>
            <person name="Lasko P."/>
            <person name="Lei Y."/>
            <person name="Levitsky A.A."/>
            <person name="Li J.H."/>
            <person name="Li Z."/>
            <person name="Liang Y."/>
            <person name="Lin X."/>
            <person name="Liu X."/>
            <person name="Mattei B."/>
            <person name="McIntosh T.C."/>
            <person name="McLeod M.P."/>
            <person name="McPherson D."/>
            <person name="Merkulov G."/>
            <person name="Milshina N.V."/>
            <person name="Mobarry C."/>
            <person name="Morris J."/>
            <person name="Moshrefi A."/>
            <person name="Mount S.M."/>
            <person name="Moy M."/>
            <person name="Murphy B."/>
            <person name="Murphy L."/>
            <person name="Muzny D.M."/>
            <person name="Nelson D.L."/>
            <person name="Nelson D.R."/>
            <person name="Nelson K.A."/>
            <person name="Nixon K."/>
            <person name="Nusskern D.R."/>
            <person name="Pacleb J.M."/>
            <person name="Palazzolo M."/>
            <person name="Pittman G.S."/>
            <person name="Pan S."/>
            <person name="Pollard J."/>
            <person name="Puri V."/>
            <person name="Reese M.G."/>
            <person name="Reinert K."/>
            <person name="Remington K."/>
            <person name="Saunders R.D.C."/>
            <person name="Scheeler F."/>
            <person name="Shen H."/>
            <person name="Shue B.C."/>
            <person name="Siden-Kiamos I."/>
            <person name="Simpson M."/>
            <person name="Skupski M.P."/>
            <person name="Smith T.J."/>
            <person name="Spier E."/>
            <person name="Spradling A.C."/>
            <person name="Stapleton M."/>
            <person name="Strong R."/>
            <person name="Sun E."/>
            <person name="Svirskas R."/>
            <person name="Tector C."/>
            <person name="Turner R."/>
            <person name="Venter E."/>
            <person name="Wang A.H."/>
            <person name="Wang X."/>
            <person name="Wang Z.-Y."/>
            <person name="Wassarman D.A."/>
            <person name="Weinstock G.M."/>
            <person name="Weissenbach J."/>
            <person name="Williams S.M."/>
            <person name="Woodage T."/>
            <person name="Worley K.C."/>
            <person name="Wu D."/>
            <person name="Yang S."/>
            <person name="Yao Q.A."/>
            <person name="Ye J."/>
            <person name="Yeh R.-F."/>
            <person name="Zaveri J.S."/>
            <person name="Zhan M."/>
            <person name="Zhang G."/>
            <person name="Zhao Q."/>
            <person name="Zheng L."/>
            <person name="Zheng X.H."/>
            <person name="Zhong F.N."/>
            <person name="Zhong W."/>
            <person name="Zhou X."/>
            <person name="Zhu S.C."/>
            <person name="Zhu X."/>
            <person name="Smith H.O."/>
            <person name="Gibbs R.A."/>
            <person name="Myers E.W."/>
            <person name="Rubin G.M."/>
            <person name="Venter J.C."/>
        </authorList>
    </citation>
    <scope>NUCLEOTIDE SEQUENCE [LARGE SCALE GENOMIC DNA]</scope>
    <source>
        <strain evidence="10">Berkeley</strain>
    </source>
</reference>
<reference evidence="10" key="2">
    <citation type="journal article" date="2002" name="Genome Biol.">
        <title>Annotation of the Drosophila melanogaster euchromatic genome: a systematic review.</title>
        <authorList>
            <person name="Misra S."/>
            <person name="Crosby M.A."/>
            <person name="Mungall C.J."/>
            <person name="Matthews B.B."/>
            <person name="Campbell K.S."/>
            <person name="Hradecky P."/>
            <person name="Huang Y."/>
            <person name="Kaminker J.S."/>
            <person name="Millburn G.H."/>
            <person name="Prochnik S.E."/>
            <person name="Smith C.D."/>
            <person name="Tupy J.L."/>
            <person name="Whitfield E.J."/>
            <person name="Bayraktaroglu L."/>
            <person name="Berman B.P."/>
            <person name="Bettencourt B.R."/>
            <person name="Celniker S.E."/>
            <person name="de Grey A.D.N.J."/>
            <person name="Drysdale R.A."/>
            <person name="Harris N.L."/>
            <person name="Richter J."/>
            <person name="Russo S."/>
            <person name="Schroeder A.J."/>
            <person name="Shu S.Q."/>
            <person name="Stapleton M."/>
            <person name="Yamada C."/>
            <person name="Ashburner M."/>
            <person name="Gelbart W.M."/>
            <person name="Rubin G.M."/>
            <person name="Lewis S.E."/>
        </authorList>
    </citation>
    <scope>GENOME REANNOTATION</scope>
    <source>
        <strain evidence="10">Berkeley</strain>
    </source>
</reference>
<reference evidence="8" key="3">
    <citation type="submission" date="2005-10" db="EMBL/GenBank/DDBJ databases">
        <authorList>
            <person name="Stapleton M."/>
            <person name="Carlson J."/>
            <person name="Chavez C."/>
            <person name="Frise E."/>
            <person name="George R."/>
            <person name="Pacleb J."/>
            <person name="Park S."/>
            <person name="Wan K."/>
            <person name="Yu C."/>
            <person name="Celniker S."/>
        </authorList>
    </citation>
    <scope>NUCLEOTIDE SEQUENCE [LARGE SCALE MRNA]</scope>
    <source>
        <strain evidence="8">Berkeley</strain>
        <tissue evidence="8">Embryo</tissue>
    </source>
</reference>
<reference evidence="7" key="4">
    <citation type="journal article" date="2002" name="Genomics">
        <title>WAC, a novel WW domain-containing adapter with a coiled-coil region, is colocalized with splicing factor SC35.</title>
        <authorList>
            <person name="Xu G.M."/>
            <person name="Arnaout M.A."/>
        </authorList>
    </citation>
    <scope>IDENTIFICATION</scope>
</reference>
<reference evidence="7" key="5">
    <citation type="journal article" date="2016" name="Dev. Cell">
        <title>WAC regulates mTOR activity by acting as an adaptor for the TTT and Pontin/Reptin complexes.</title>
        <authorList>
            <person name="David-Morrison G."/>
            <person name="Xu Z."/>
            <person name="Rui Y.N."/>
            <person name="Charng W.L."/>
            <person name="Jaiswal M."/>
            <person name="Yamamoto S."/>
            <person name="Xiong B."/>
            <person name="Zhang K."/>
            <person name="Sandoval H."/>
            <person name="Duraine L."/>
            <person name="Zuo Z."/>
            <person name="Zhang S."/>
            <person name="Bellen H.J."/>
        </authorList>
    </citation>
    <scope>FUNCTION</scope>
    <scope>SUBCELLULAR LOCATION</scope>
    <scope>TISSUE SPECIFICITY</scope>
    <scope>DISRUPTION PHENOTYPE</scope>
</reference>
<reference evidence="7" key="6">
    <citation type="journal article" date="2016" name="Eur. J. Hum. Genet.">
        <title>De novo loss-of-function mutations in WAC cause a recognizable intellectual disability syndrome and learning deficits in Drosophila.</title>
        <authorList>
            <person name="Lugtenberg D."/>
            <person name="Reijnders M.R."/>
            <person name="Fenckova M."/>
            <person name="Bijlsma E.K."/>
            <person name="Bernier R."/>
            <person name="van Bon B.W."/>
            <person name="Smeets E."/>
            <person name="Vulto-van Silfhout A.T."/>
            <person name="Bosch D."/>
            <person name="Eichler E.E."/>
            <person name="Mefford H.C."/>
            <person name="Carvill G.L."/>
            <person name="Bongers E.M."/>
            <person name="Schuurs-Hoeijmakers J.H."/>
            <person name="Ruivenkamp C.A."/>
            <person name="Santen G.W."/>
            <person name="van den Maagdenberg A.M."/>
            <person name="Peeters-Scholte C.M."/>
            <person name="Kuenen S."/>
            <person name="Verstreken P."/>
            <person name="Pfundt R."/>
            <person name="Yntema H.G."/>
            <person name="de Vries P.F."/>
            <person name="Veltman J.A."/>
            <person name="Hoischen A."/>
            <person name="Gilissen C."/>
            <person name="de Vries B.B."/>
            <person name="Schenck A."/>
            <person name="Kleefstra T."/>
            <person name="Vissers L.E."/>
        </authorList>
    </citation>
    <scope>FUNCTION</scope>
    <scope>DISRUPTION PHENOTYPE</scope>
</reference>
<protein>
    <recommendedName>
        <fullName evidence="7">WW domain-containing adapter protein with coiled-coil homolog</fullName>
    </recommendedName>
    <alternativeName>
        <fullName evidence="6">Protein wacky</fullName>
    </alternativeName>
</protein>
<dbReference type="EMBL" id="AE014298">
    <property type="protein sequence ID" value="AAF48690.2"/>
    <property type="molecule type" value="Genomic_DNA"/>
</dbReference>
<dbReference type="EMBL" id="AE014298">
    <property type="protein sequence ID" value="AFH07438.1"/>
    <property type="molecule type" value="Genomic_DNA"/>
</dbReference>
<dbReference type="EMBL" id="BT023944">
    <property type="protein sequence ID" value="ABB36448.1"/>
    <property type="molecule type" value="mRNA"/>
</dbReference>
<dbReference type="RefSeq" id="NP_001245725.1">
    <property type="nucleotide sequence ID" value="NM_001258796.2"/>
</dbReference>
<dbReference type="RefSeq" id="NP_573187.2">
    <property type="nucleotide sequence ID" value="NM_132959.3"/>
</dbReference>
<dbReference type="SMR" id="Q9VX88"/>
<dbReference type="FunCoup" id="Q9VX88">
    <property type="interactions" value="3043"/>
</dbReference>
<dbReference type="IntAct" id="Q9VX88">
    <property type="interactions" value="1"/>
</dbReference>
<dbReference type="STRING" id="7227.FBpp0302662"/>
<dbReference type="GlyGen" id="Q9VX88">
    <property type="glycosylation" value="3 sites"/>
</dbReference>
<dbReference type="PaxDb" id="7227-FBpp0302662"/>
<dbReference type="EnsemblMetazoa" id="FBtr0074412">
    <property type="protein sequence ID" value="FBpp0074186"/>
    <property type="gene ID" value="FBgn0030812"/>
</dbReference>
<dbReference type="EnsemblMetazoa" id="FBtr0304840">
    <property type="protein sequence ID" value="FBpp0293380"/>
    <property type="gene ID" value="FBgn0030812"/>
</dbReference>
<dbReference type="GeneID" id="32690"/>
<dbReference type="KEGG" id="dme:Dmel_CG8949"/>
<dbReference type="UCSC" id="CG8949-RA">
    <property type="organism name" value="d. melanogaster"/>
</dbReference>
<dbReference type="AGR" id="FB:FBgn0030812"/>
<dbReference type="CTD" id="32690"/>
<dbReference type="FlyBase" id="FBgn0030812">
    <property type="gene designation" value="wcy"/>
</dbReference>
<dbReference type="VEuPathDB" id="VectorBase:FBgn0030812"/>
<dbReference type="eggNOG" id="KOG0152">
    <property type="taxonomic scope" value="Eukaryota"/>
</dbReference>
<dbReference type="GeneTree" id="ENSGT00440000037780"/>
<dbReference type="HOGENOM" id="CLU_009856_0_0_1"/>
<dbReference type="InParanoid" id="Q9VX88"/>
<dbReference type="OrthoDB" id="10072039at2759"/>
<dbReference type="PhylomeDB" id="Q9VX88"/>
<dbReference type="Reactome" id="R-DME-8866654">
    <property type="pathway name" value="E3 ubiquitin ligases ubiquitinate target proteins"/>
</dbReference>
<dbReference type="BioGRID-ORCS" id="32690">
    <property type="hits" value="0 hits in 1 CRISPR screen"/>
</dbReference>
<dbReference type="ChiTaRS" id="wcy">
    <property type="organism name" value="fly"/>
</dbReference>
<dbReference type="GenomeRNAi" id="32690"/>
<dbReference type="PRO" id="PR:Q9VX88"/>
<dbReference type="Proteomes" id="UP000000803">
    <property type="component" value="Chromosome X"/>
</dbReference>
<dbReference type="Bgee" id="FBgn0030812">
    <property type="expression patterns" value="Expressed in adult oenocyte (Drosophila) in body wall and 270 other cell types or tissues"/>
</dbReference>
<dbReference type="ExpressionAtlas" id="Q9VX88">
    <property type="expression patterns" value="baseline and differential"/>
</dbReference>
<dbReference type="GO" id="GO:0005764">
    <property type="term" value="C:lysosome"/>
    <property type="evidence" value="ECO:0000314"/>
    <property type="project" value="FlyBase"/>
</dbReference>
<dbReference type="GO" id="GO:0005634">
    <property type="term" value="C:nucleus"/>
    <property type="evidence" value="ECO:0000314"/>
    <property type="project" value="FlyBase"/>
</dbReference>
<dbReference type="GO" id="GO:0003682">
    <property type="term" value="F:chromatin binding"/>
    <property type="evidence" value="ECO:0000318"/>
    <property type="project" value="GO_Central"/>
</dbReference>
<dbReference type="GO" id="GO:0000993">
    <property type="term" value="F:RNA polymerase II complex binding"/>
    <property type="evidence" value="ECO:0000318"/>
    <property type="project" value="GO_Central"/>
</dbReference>
<dbReference type="GO" id="GO:0006914">
    <property type="term" value="P:autophagy"/>
    <property type="evidence" value="ECO:0007669"/>
    <property type="project" value="UniProtKB-KW"/>
</dbReference>
<dbReference type="GO" id="GO:0006325">
    <property type="term" value="P:chromatin organization"/>
    <property type="evidence" value="ECO:0007669"/>
    <property type="project" value="UniProtKB-KW"/>
</dbReference>
<dbReference type="GO" id="GO:0046959">
    <property type="term" value="P:habituation"/>
    <property type="evidence" value="ECO:0000315"/>
    <property type="project" value="UniProtKB"/>
</dbReference>
<dbReference type="GO" id="GO:0010507">
    <property type="term" value="P:negative regulation of autophagy"/>
    <property type="evidence" value="ECO:0000315"/>
    <property type="project" value="FlyBase"/>
</dbReference>
<dbReference type="GO" id="GO:1904263">
    <property type="term" value="P:positive regulation of TORC1 signaling"/>
    <property type="evidence" value="ECO:0000315"/>
    <property type="project" value="FlyBase"/>
</dbReference>
<dbReference type="GO" id="GO:0010506">
    <property type="term" value="P:regulation of autophagy"/>
    <property type="evidence" value="ECO:0000318"/>
    <property type="project" value="GO_Central"/>
</dbReference>
<dbReference type="CDD" id="cd00201">
    <property type="entry name" value="WW"/>
    <property type="match status" value="1"/>
</dbReference>
<dbReference type="FunFam" id="2.20.70.10:FF:000089">
    <property type="entry name" value="Blast:WW domain-containing adapter protein with coiled-coil"/>
    <property type="match status" value="1"/>
</dbReference>
<dbReference type="Gene3D" id="2.20.70.10">
    <property type="match status" value="1"/>
</dbReference>
<dbReference type="InterPro" id="IPR038867">
    <property type="entry name" value="WAC"/>
</dbReference>
<dbReference type="InterPro" id="IPR001202">
    <property type="entry name" value="WW_dom"/>
</dbReference>
<dbReference type="InterPro" id="IPR036020">
    <property type="entry name" value="WW_dom_sf"/>
</dbReference>
<dbReference type="PANTHER" id="PTHR15911">
    <property type="entry name" value="WW DOMAIN-CONTAINING ADAPTER PROTEIN WITH COILED-COIL"/>
    <property type="match status" value="1"/>
</dbReference>
<dbReference type="PANTHER" id="PTHR15911:SF6">
    <property type="entry name" value="WW DOMAIN-CONTAINING ADAPTER PROTEIN WITH COILED-COIL"/>
    <property type="match status" value="1"/>
</dbReference>
<dbReference type="Pfam" id="PF00397">
    <property type="entry name" value="WW"/>
    <property type="match status" value="1"/>
</dbReference>
<dbReference type="SMART" id="SM00456">
    <property type="entry name" value="WW"/>
    <property type="match status" value="1"/>
</dbReference>
<dbReference type="SUPFAM" id="SSF51045">
    <property type="entry name" value="WW domain"/>
    <property type="match status" value="1"/>
</dbReference>
<dbReference type="PROSITE" id="PS01159">
    <property type="entry name" value="WW_DOMAIN_1"/>
    <property type="match status" value="1"/>
</dbReference>
<dbReference type="PROSITE" id="PS50020">
    <property type="entry name" value="WW_DOMAIN_2"/>
    <property type="match status" value="1"/>
</dbReference>
<gene>
    <name evidence="6 9" type="primary">wcy</name>
    <name evidence="9" type="ORF">CG8949</name>
</gene>
<evidence type="ECO:0000250" key="1">
    <source>
        <dbReference type="UniProtKB" id="Q9BTA9"/>
    </source>
</evidence>
<evidence type="ECO:0000255" key="2">
    <source>
        <dbReference type="PROSITE-ProRule" id="PRU00224"/>
    </source>
</evidence>
<evidence type="ECO:0000256" key="3">
    <source>
        <dbReference type="SAM" id="MobiDB-lite"/>
    </source>
</evidence>
<evidence type="ECO:0000269" key="4">
    <source>
    </source>
</evidence>
<evidence type="ECO:0000269" key="5">
    <source>
    </source>
</evidence>
<evidence type="ECO:0000303" key="6">
    <source>
    </source>
</evidence>
<evidence type="ECO:0000305" key="7"/>
<evidence type="ECO:0000312" key="8">
    <source>
        <dbReference type="EMBL" id="ABB36448.1"/>
    </source>
</evidence>
<evidence type="ECO:0000312" key="9">
    <source>
        <dbReference type="FlyBase" id="FBgn0030812"/>
    </source>
</evidence>
<evidence type="ECO:0000312" key="10">
    <source>
        <dbReference type="Proteomes" id="UP000000803"/>
    </source>
</evidence>
<proteinExistence type="evidence at transcript level"/>